<dbReference type="EMBL" id="CP001283">
    <property type="protein sequence ID" value="ACK87705.1"/>
    <property type="molecule type" value="Genomic_DNA"/>
</dbReference>
<dbReference type="RefSeq" id="WP_000831901.1">
    <property type="nucleotide sequence ID" value="NC_011773.1"/>
</dbReference>
<dbReference type="SMR" id="B7JIL5"/>
<dbReference type="GeneID" id="93005634"/>
<dbReference type="KEGG" id="bcu:BCAH820_5598"/>
<dbReference type="HOGENOM" id="CLU_129938_2_0_9"/>
<dbReference type="Proteomes" id="UP000001363">
    <property type="component" value="Chromosome"/>
</dbReference>
<dbReference type="GO" id="GO:1990904">
    <property type="term" value="C:ribonucleoprotein complex"/>
    <property type="evidence" value="ECO:0007669"/>
    <property type="project" value="UniProtKB-KW"/>
</dbReference>
<dbReference type="GO" id="GO:0005840">
    <property type="term" value="C:ribosome"/>
    <property type="evidence" value="ECO:0007669"/>
    <property type="project" value="UniProtKB-KW"/>
</dbReference>
<dbReference type="GO" id="GO:0003735">
    <property type="term" value="F:structural constituent of ribosome"/>
    <property type="evidence" value="ECO:0007669"/>
    <property type="project" value="InterPro"/>
</dbReference>
<dbReference type="GO" id="GO:0006412">
    <property type="term" value="P:translation"/>
    <property type="evidence" value="ECO:0007669"/>
    <property type="project" value="UniProtKB-UniRule"/>
</dbReference>
<dbReference type="FunFam" id="1.10.287.3980:FF:000001">
    <property type="entry name" value="Mitochondrial ribosomal protein L34"/>
    <property type="match status" value="1"/>
</dbReference>
<dbReference type="Gene3D" id="1.10.287.3980">
    <property type="match status" value="1"/>
</dbReference>
<dbReference type="HAMAP" id="MF_00391">
    <property type="entry name" value="Ribosomal_bL34"/>
    <property type="match status" value="1"/>
</dbReference>
<dbReference type="InterPro" id="IPR000271">
    <property type="entry name" value="Ribosomal_bL34"/>
</dbReference>
<dbReference type="InterPro" id="IPR020939">
    <property type="entry name" value="Ribosomal_bL34_CS"/>
</dbReference>
<dbReference type="NCBIfam" id="TIGR01030">
    <property type="entry name" value="rpmH_bact"/>
    <property type="match status" value="1"/>
</dbReference>
<dbReference type="PANTHER" id="PTHR14503:SF4">
    <property type="entry name" value="LARGE RIBOSOMAL SUBUNIT PROTEIN BL34M"/>
    <property type="match status" value="1"/>
</dbReference>
<dbReference type="PANTHER" id="PTHR14503">
    <property type="entry name" value="MITOCHONDRIAL RIBOSOMAL PROTEIN 34 FAMILY MEMBER"/>
    <property type="match status" value="1"/>
</dbReference>
<dbReference type="Pfam" id="PF00468">
    <property type="entry name" value="Ribosomal_L34"/>
    <property type="match status" value="1"/>
</dbReference>
<dbReference type="PROSITE" id="PS00784">
    <property type="entry name" value="RIBOSOMAL_L34"/>
    <property type="match status" value="1"/>
</dbReference>
<keyword id="KW-0687">Ribonucleoprotein</keyword>
<keyword id="KW-0689">Ribosomal protein</keyword>
<name>RL34_BACC0</name>
<gene>
    <name evidence="1" type="primary">rpmH</name>
    <name type="ordered locus">BCAH820_5598</name>
</gene>
<protein>
    <recommendedName>
        <fullName evidence="1">Large ribosomal subunit protein bL34</fullName>
    </recommendedName>
    <alternativeName>
        <fullName evidence="3">50S ribosomal protein L34</fullName>
    </alternativeName>
</protein>
<comment type="similarity">
    <text evidence="1">Belongs to the bacterial ribosomal protein bL34 family.</text>
</comment>
<organism>
    <name type="scientific">Bacillus cereus (strain AH820)</name>
    <dbReference type="NCBI Taxonomy" id="405535"/>
    <lineage>
        <taxon>Bacteria</taxon>
        <taxon>Bacillati</taxon>
        <taxon>Bacillota</taxon>
        <taxon>Bacilli</taxon>
        <taxon>Bacillales</taxon>
        <taxon>Bacillaceae</taxon>
        <taxon>Bacillus</taxon>
        <taxon>Bacillus cereus group</taxon>
    </lineage>
</organism>
<reference key="1">
    <citation type="submission" date="2008-10" db="EMBL/GenBank/DDBJ databases">
        <title>Genome sequence of Bacillus cereus AH820.</title>
        <authorList>
            <person name="Dodson R.J."/>
            <person name="Durkin A.S."/>
            <person name="Rosovitz M.J."/>
            <person name="Rasko D.A."/>
            <person name="Hoffmaster A."/>
            <person name="Ravel J."/>
            <person name="Sutton G."/>
        </authorList>
    </citation>
    <scope>NUCLEOTIDE SEQUENCE [LARGE SCALE GENOMIC DNA]</scope>
    <source>
        <strain>AH820</strain>
    </source>
</reference>
<evidence type="ECO:0000255" key="1">
    <source>
        <dbReference type="HAMAP-Rule" id="MF_00391"/>
    </source>
</evidence>
<evidence type="ECO:0000256" key="2">
    <source>
        <dbReference type="SAM" id="MobiDB-lite"/>
    </source>
</evidence>
<evidence type="ECO:0000305" key="3"/>
<sequence length="44" mass="5170">MKRTYQPNKRKRSKVHGFRSRMSTANGRKVLAARRRKGRKVLSA</sequence>
<feature type="chain" id="PRO_1000122892" description="Large ribosomal subunit protein bL34">
    <location>
        <begin position="1"/>
        <end position="44"/>
    </location>
</feature>
<feature type="region of interest" description="Disordered" evidence="2">
    <location>
        <begin position="1"/>
        <end position="44"/>
    </location>
</feature>
<feature type="compositionally biased region" description="Basic residues" evidence="2">
    <location>
        <begin position="1"/>
        <end position="19"/>
    </location>
</feature>
<feature type="compositionally biased region" description="Basic residues" evidence="2">
    <location>
        <begin position="31"/>
        <end position="44"/>
    </location>
</feature>
<accession>B7JIL5</accession>
<proteinExistence type="inferred from homology"/>